<proteinExistence type="evidence at protein level"/>
<comment type="function">
    <text evidence="5 6 7">Acts as a nucleation-promoting factor (NPF) that stimulates Arp2/3-mediated actin polymerization both at the Golgi apparatus and along tubular membranes. Its activity in membrane tubulation requires F-actin and interaction with microtubules. Proposed to use coordinated actin-nucleating and microtubule-binding activities of distinct WHAMM molecules to drive membrane tubule elongation; when MT-bound can recruit and remodel membrane vesicles but is prevented to activate the Arp2/3 complex. Involved as a regulator of Golgi positioning and morphology. Participates in vesicle transport between the reticulum endoplasmic and the Golgi complex. Required for RhoD-dependent actin reorganization such as in cell adhesion and cell migration.</text>
</comment>
<comment type="subunit">
    <text evidence="5 6 7">Interacts with ACTR3; indicative for an association with the ARP2/3 complex. Associates with microtubules; in vitro binds to tubulin heterodimer in a 1:1 stoichiometry; decorates microtubules with a repeat of 80 A along protofilaments. Interacts with RHOD (in GTP-bound form).</text>
</comment>
<comment type="subcellular location">
    <subcellularLocation>
        <location evidence="5">Cytoplasm</location>
    </subcellularLocation>
    <subcellularLocation>
        <location evidence="5">Endoplasmic reticulum-Golgi intermediate compartment</location>
    </subcellularLocation>
    <subcellularLocation>
        <location evidence="5">Cytoplasmic vesicle membrane</location>
    </subcellularLocation>
    <subcellularLocation>
        <location evidence="5">Golgi apparatus</location>
        <location evidence="5">cis-Golgi network</location>
    </subcellularLocation>
    <text evidence="5">Localized to a perinuclear compartment near the microtubule-organizing center (MTOC). Also detected on tubulo-vesicular structures in the cell periphery that frequently localized along microtubules.</text>
</comment>
<comment type="tissue specificity">
    <text>Expressed in brain, lung, heart, colon and kidney (at protein level).</text>
</comment>
<comment type="domain">
    <text>The N-terminal region associates with membranes, the coiled-coil region binds to microtubules and the WH2 domains promotes actin nucleation.</text>
</comment>
<comment type="sequence caution" evidence="8">
    <conflict type="erroneous initiation">
        <sequence resource="EMBL-CDS" id="BAB85557"/>
    </conflict>
    <text>Extended N-terminus.</text>
</comment>
<comment type="sequence caution" evidence="8">
    <conflict type="erroneous initiation">
        <sequence resource="EMBL-CDS" id="BAB85557"/>
    </conflict>
    <text>Truncated N-terminus.</text>
</comment>
<comment type="sequence caution" evidence="8">
    <conflict type="miscellaneous discrepancy">
        <sequence resource="EMBL-CDS" id="BAC05201"/>
    </conflict>
    <text>Unlikely isoform. Aberrant splice sites.</text>
</comment>
<gene>
    <name type="primary">WHAMM</name>
    <name type="synonym">KIAA1971</name>
    <name type="synonym">WHDC1</name>
</gene>
<sequence>MEDEQPDSLEGWVPVREGLFAEPERHRLRFLVAWNGAEGKFAVTCHDRTAQQRRLREGARLGPEPEPKPEAAVSPSSWAGLLSAAGLRGAHRQLAALWPPLERCFPRLPPELDVGGGGAWGLGLGLWALLWPTRAGPGEAALQELCGQLERYLGAAADGCGGATVRDALFPAEGGAADCESPREFRERALRARWVEADARLRQVIQGHGKANTMVALMNVYQEEDEAYQELVTVATMFFQYLLQPFRAMREVATLCKLDILKSLDEDDLGPRRVVALEKEAEEWTRRAEEAVVSIQDITVNYFKETVKALAGMQKEMEQDAKRFGQAAWATAIPRLEKLQLMLARETLQLMRAKELCLNHKRAEIQGKMEDLPEQEKNTNVVDELEIQFYEIQLELYEVKFEILKNEEILLTTQLDSLKRLIKEKQDEVVYYDPCENPEELKVIDCVVGLQDDKNLEVKELRRQCQQLESKRGRICAKRASLRSRKDQCKENHRFRLQQAEESIRYSRQHHSIQMKRDKIKEEEQKKKEWINQERQKTLQRLRSFKDKRLAQSVRNTSGSEPVAPNLPSDLSQQMCLPASHAVSVIHPSSRKTRGVPLSEAGNVKSPKCQNCHGNIPVQVFVPVGDQTHSKSSEELSLPPPPPPPPPPPPPPPPPPPPLRALSSSSQAATHQNLGFRAPVKDDQPRPLVCESPAERPRDSLESFSCPGSMDEVLASLRHGRAPLRKVEVPAVRPPHASINEHILAAIRQGVKLKKVHPDLGPNPSSKPTSNRRTSDLERSIKAALQRIKRVSADSEEDSDEQDPGQWDG</sequence>
<organism>
    <name type="scientific">Homo sapiens</name>
    <name type="common">Human</name>
    <dbReference type="NCBI Taxonomy" id="9606"/>
    <lineage>
        <taxon>Eukaryota</taxon>
        <taxon>Metazoa</taxon>
        <taxon>Chordata</taxon>
        <taxon>Craniata</taxon>
        <taxon>Vertebrata</taxon>
        <taxon>Euteleostomi</taxon>
        <taxon>Mammalia</taxon>
        <taxon>Eutheria</taxon>
        <taxon>Euarchontoglires</taxon>
        <taxon>Primates</taxon>
        <taxon>Haplorrhini</taxon>
        <taxon>Catarrhini</taxon>
        <taxon>Hominidae</taxon>
        <taxon>Homo</taxon>
    </lineage>
</organism>
<feature type="chain" id="PRO_0000295100" description="WASP homolog-associated protein with actin, membranes and microtubules">
    <location>
        <begin position="1"/>
        <end position="809"/>
    </location>
</feature>
<feature type="domain" description="WH2 1" evidence="3">
    <location>
        <begin position="709"/>
        <end position="727"/>
    </location>
</feature>
<feature type="domain" description="WH2 2" evidence="3">
    <location>
        <begin position="739"/>
        <end position="756"/>
    </location>
</feature>
<feature type="region of interest" description="Mediates association with membranes" evidence="5">
    <location>
        <begin position="1"/>
        <end position="260"/>
    </location>
</feature>
<feature type="region of interest" description="Mediates interaction with microtubules" evidence="6">
    <location>
        <begin position="261"/>
        <end position="630"/>
    </location>
</feature>
<feature type="region of interest" description="Disordered" evidence="4">
    <location>
        <begin position="506"/>
        <end position="528"/>
    </location>
</feature>
<feature type="region of interest" description="Disordered" evidence="4">
    <location>
        <begin position="546"/>
        <end position="571"/>
    </location>
</feature>
<feature type="region of interest" description="Disordered" evidence="4">
    <location>
        <begin position="586"/>
        <end position="612"/>
    </location>
</feature>
<feature type="region of interest" description="Disordered" evidence="4">
    <location>
        <begin position="627"/>
        <end position="707"/>
    </location>
</feature>
<feature type="region of interest" description="Mediates actin nucleation" evidence="5">
    <location>
        <begin position="631"/>
        <end position="809"/>
    </location>
</feature>
<feature type="region of interest" description="Disordered" evidence="4">
    <location>
        <begin position="754"/>
        <end position="809"/>
    </location>
</feature>
<feature type="coiled-coil region" evidence="2">
    <location>
        <begin position="271"/>
        <end position="298"/>
    </location>
</feature>
<feature type="coiled-coil region" evidence="2">
    <location>
        <begin position="384"/>
        <end position="479"/>
    </location>
</feature>
<feature type="coiled-coil region" evidence="2">
    <location>
        <begin position="512"/>
        <end position="542"/>
    </location>
</feature>
<feature type="coiled-coil region" evidence="2">
    <location>
        <begin position="770"/>
        <end position="797"/>
    </location>
</feature>
<feature type="compositionally biased region" description="Basic and acidic residues" evidence="4">
    <location>
        <begin position="515"/>
        <end position="528"/>
    </location>
</feature>
<feature type="compositionally biased region" description="Pro residues" evidence="4">
    <location>
        <begin position="638"/>
        <end position="659"/>
    </location>
</feature>
<feature type="compositionally biased region" description="Polar residues" evidence="4">
    <location>
        <begin position="662"/>
        <end position="673"/>
    </location>
</feature>
<feature type="compositionally biased region" description="Polar residues" evidence="4">
    <location>
        <begin position="763"/>
        <end position="772"/>
    </location>
</feature>
<feature type="compositionally biased region" description="Acidic residues" evidence="4">
    <location>
        <begin position="794"/>
        <end position="803"/>
    </location>
</feature>
<feature type="modified residue" description="Phosphoserine" evidence="9">
    <location>
        <position position="606"/>
    </location>
</feature>
<feature type="modified residue" description="Phosphoserine" evidence="1">
    <location>
        <position position="795"/>
    </location>
</feature>
<feature type="sequence variant" id="VAR_061721" description="In dbSNP:rs35270670.">
    <original>N</original>
    <variation>S</variation>
    <location>
        <position position="212"/>
    </location>
</feature>
<feature type="sequence variant" id="VAR_033209" description="In dbSNP:rs1055666.">
    <original>Q</original>
    <variation>K</variation>
    <location>
        <position position="340"/>
    </location>
</feature>
<feature type="sequence variant" id="VAR_033210" description="In dbSNP:rs1055667.">
    <original>R</original>
    <variation>Q</variation>
    <location>
        <position position="345"/>
    </location>
</feature>
<feature type="sequence variant" id="VAR_033211" description="In dbSNP:rs3814281.">
    <original>R</original>
    <variation>H</variation>
    <location>
        <position position="686"/>
    </location>
</feature>
<feature type="sequence variant" id="VAR_051489" description="In dbSNP:rs11259953.">
    <original>H</original>
    <variation>P</variation>
    <location>
        <position position="736"/>
    </location>
</feature>
<feature type="sequence variant" id="VAR_051490" description="In dbSNP:rs11259954.">
    <original>H</original>
    <variation>Q</variation>
    <location>
        <position position="736"/>
    </location>
</feature>
<feature type="mutagenesis site" description="Decreases nucleation-promoting factor activity and Arp2/3 complex activation." evidence="5">
    <original>W</original>
    <variation>A</variation>
    <location>
        <position position="807"/>
    </location>
</feature>
<name>WHAMM_HUMAN</name>
<keyword id="KW-0002">3D-structure</keyword>
<keyword id="KW-0009">Actin-binding</keyword>
<keyword id="KW-0175">Coiled coil</keyword>
<keyword id="KW-0963">Cytoplasm</keyword>
<keyword id="KW-0968">Cytoplasmic vesicle</keyword>
<keyword id="KW-0333">Golgi apparatus</keyword>
<keyword id="KW-0472">Membrane</keyword>
<keyword id="KW-0493">Microtubule</keyword>
<keyword id="KW-0597">Phosphoprotein</keyword>
<keyword id="KW-1267">Proteomics identification</keyword>
<keyword id="KW-1185">Reference proteome</keyword>
<keyword id="KW-0677">Repeat</keyword>
<evidence type="ECO:0000250" key="1">
    <source>
        <dbReference type="UniProtKB" id="Q571B6"/>
    </source>
</evidence>
<evidence type="ECO:0000255" key="2"/>
<evidence type="ECO:0000255" key="3">
    <source>
        <dbReference type="PROSITE-ProRule" id="PRU00406"/>
    </source>
</evidence>
<evidence type="ECO:0000256" key="4">
    <source>
        <dbReference type="SAM" id="MobiDB-lite"/>
    </source>
</evidence>
<evidence type="ECO:0000269" key="5">
    <source>
    </source>
</evidence>
<evidence type="ECO:0000269" key="6">
    <source>
    </source>
</evidence>
<evidence type="ECO:0000269" key="7">
    <source>
    </source>
</evidence>
<evidence type="ECO:0000305" key="8"/>
<evidence type="ECO:0007744" key="9">
    <source>
    </source>
</evidence>
<dbReference type="EMBL" id="AB075851">
    <property type="protein sequence ID" value="BAB85557.1"/>
    <property type="status" value="ALT_INIT"/>
    <property type="molecule type" value="mRNA"/>
</dbReference>
<dbReference type="EMBL" id="AC044907">
    <property type="status" value="NOT_ANNOTATED_CDS"/>
    <property type="molecule type" value="Genomic_DNA"/>
</dbReference>
<dbReference type="EMBL" id="AK097947">
    <property type="protein sequence ID" value="BAC05201.1"/>
    <property type="status" value="ALT_SEQ"/>
    <property type="molecule type" value="mRNA"/>
</dbReference>
<dbReference type="CCDS" id="CCDS45333.1"/>
<dbReference type="RefSeq" id="NP_001073904.1">
    <property type="nucleotide sequence ID" value="NM_001080435.3"/>
</dbReference>
<dbReference type="PDB" id="5X1G">
    <property type="method" value="EM"/>
    <property type="resolution" value="4.50 A"/>
    <property type="chains" value="C=513-546"/>
</dbReference>
<dbReference type="PDBsum" id="5X1G"/>
<dbReference type="EMDB" id="EMD-6701"/>
<dbReference type="SMR" id="Q8TF30"/>
<dbReference type="BioGRID" id="125830">
    <property type="interactions" value="9"/>
</dbReference>
<dbReference type="CORUM" id="Q8TF30"/>
<dbReference type="FunCoup" id="Q8TF30">
    <property type="interactions" value="1207"/>
</dbReference>
<dbReference type="IntAct" id="Q8TF30">
    <property type="interactions" value="8"/>
</dbReference>
<dbReference type="STRING" id="9606.ENSP00000286760"/>
<dbReference type="GlyGen" id="Q8TF30">
    <property type="glycosylation" value="1 site, 1 O-linked glycan (1 site)"/>
</dbReference>
<dbReference type="iPTMnet" id="Q8TF30"/>
<dbReference type="PhosphoSitePlus" id="Q8TF30"/>
<dbReference type="BioMuta" id="WHAMM"/>
<dbReference type="DMDM" id="152112352"/>
<dbReference type="jPOST" id="Q8TF30"/>
<dbReference type="MassIVE" id="Q8TF30"/>
<dbReference type="PaxDb" id="9606-ENSP00000286760"/>
<dbReference type="PeptideAtlas" id="Q8TF30"/>
<dbReference type="ProteomicsDB" id="74545"/>
<dbReference type="Pumba" id="Q8TF30"/>
<dbReference type="Antibodypedia" id="49806">
    <property type="antibodies" value="28 antibodies from 14 providers"/>
</dbReference>
<dbReference type="DNASU" id="123720"/>
<dbReference type="Ensembl" id="ENST00000286760.5">
    <property type="protein sequence ID" value="ENSP00000286760.4"/>
    <property type="gene ID" value="ENSG00000156232.7"/>
</dbReference>
<dbReference type="GeneID" id="123720"/>
<dbReference type="KEGG" id="hsa:123720"/>
<dbReference type="MANE-Select" id="ENST00000286760.5">
    <property type="protein sequence ID" value="ENSP00000286760.4"/>
    <property type="RefSeq nucleotide sequence ID" value="NM_001080435.3"/>
    <property type="RefSeq protein sequence ID" value="NP_001073904.1"/>
</dbReference>
<dbReference type="UCSC" id="uc002bje.5">
    <property type="organism name" value="human"/>
</dbReference>
<dbReference type="AGR" id="HGNC:30493"/>
<dbReference type="CTD" id="123720"/>
<dbReference type="DisGeNET" id="123720"/>
<dbReference type="GeneCards" id="WHAMM"/>
<dbReference type="HGNC" id="HGNC:30493">
    <property type="gene designation" value="WHAMM"/>
</dbReference>
<dbReference type="HPA" id="ENSG00000156232">
    <property type="expression patterns" value="Tissue enhanced (bone)"/>
</dbReference>
<dbReference type="MIM" id="612393">
    <property type="type" value="gene"/>
</dbReference>
<dbReference type="neXtProt" id="NX_Q8TF30"/>
<dbReference type="OpenTargets" id="ENSG00000156232"/>
<dbReference type="PharmGKB" id="PA164727567"/>
<dbReference type="VEuPathDB" id="HostDB:ENSG00000156232"/>
<dbReference type="eggNOG" id="ENOG502QPSI">
    <property type="taxonomic scope" value="Eukaryota"/>
</dbReference>
<dbReference type="GeneTree" id="ENSGT00510000046704"/>
<dbReference type="HOGENOM" id="CLU_012316_1_0_1"/>
<dbReference type="InParanoid" id="Q8TF30"/>
<dbReference type="OMA" id="IQFYEIQ"/>
<dbReference type="OrthoDB" id="6284683at2759"/>
<dbReference type="PAN-GO" id="Q8TF30">
    <property type="GO annotations" value="5 GO annotations based on evolutionary models"/>
</dbReference>
<dbReference type="PhylomeDB" id="Q8TF30"/>
<dbReference type="TreeFam" id="TF331023"/>
<dbReference type="PathwayCommons" id="Q8TF30"/>
<dbReference type="Reactome" id="R-HSA-9013405">
    <property type="pathway name" value="RHOD GTPase cycle"/>
</dbReference>
<dbReference type="SignaLink" id="Q8TF30"/>
<dbReference type="SIGNOR" id="Q8TF30"/>
<dbReference type="BioGRID-ORCS" id="123720">
    <property type="hits" value="79 hits in 1159 CRISPR screens"/>
</dbReference>
<dbReference type="ChiTaRS" id="WHAMM">
    <property type="organism name" value="human"/>
</dbReference>
<dbReference type="GenomeRNAi" id="123720"/>
<dbReference type="Pharos" id="Q8TF30">
    <property type="development level" value="Tbio"/>
</dbReference>
<dbReference type="PRO" id="PR:Q8TF30"/>
<dbReference type="Proteomes" id="UP000005640">
    <property type="component" value="Chromosome 15"/>
</dbReference>
<dbReference type="RNAct" id="Q8TF30">
    <property type="molecule type" value="protein"/>
</dbReference>
<dbReference type="Bgee" id="ENSG00000156232">
    <property type="expression patterns" value="Expressed in amniotic fluid and 177 other cell types or tissues"/>
</dbReference>
<dbReference type="GO" id="GO:0005737">
    <property type="term" value="C:cytoplasm"/>
    <property type="evidence" value="ECO:0000318"/>
    <property type="project" value="GO_Central"/>
</dbReference>
<dbReference type="GO" id="GO:0030659">
    <property type="term" value="C:cytoplasmic vesicle membrane"/>
    <property type="evidence" value="ECO:0007669"/>
    <property type="project" value="UniProtKB-SubCell"/>
</dbReference>
<dbReference type="GO" id="GO:0005829">
    <property type="term" value="C:cytosol"/>
    <property type="evidence" value="ECO:0000314"/>
    <property type="project" value="HPA"/>
</dbReference>
<dbReference type="GO" id="GO:0033116">
    <property type="term" value="C:endoplasmic reticulum-Golgi intermediate compartment membrane"/>
    <property type="evidence" value="ECO:0000314"/>
    <property type="project" value="UniProtKB"/>
</dbReference>
<dbReference type="GO" id="GO:0000139">
    <property type="term" value="C:Golgi membrane"/>
    <property type="evidence" value="ECO:0000314"/>
    <property type="project" value="UniProtKB"/>
</dbReference>
<dbReference type="GO" id="GO:0005874">
    <property type="term" value="C:microtubule"/>
    <property type="evidence" value="ECO:0007669"/>
    <property type="project" value="UniProtKB-KW"/>
</dbReference>
<dbReference type="GO" id="GO:0003779">
    <property type="term" value="F:actin binding"/>
    <property type="evidence" value="ECO:0007669"/>
    <property type="project" value="UniProtKB-KW"/>
</dbReference>
<dbReference type="GO" id="GO:0071933">
    <property type="term" value="F:Arp2/3 complex binding"/>
    <property type="evidence" value="ECO:0000314"/>
    <property type="project" value="UniProtKB"/>
</dbReference>
<dbReference type="GO" id="GO:0008017">
    <property type="term" value="F:microtubule binding"/>
    <property type="evidence" value="ECO:0000314"/>
    <property type="project" value="UniProtKB"/>
</dbReference>
<dbReference type="GO" id="GO:0031267">
    <property type="term" value="F:small GTPase binding"/>
    <property type="evidence" value="ECO:0000314"/>
    <property type="project" value="UniProtKB"/>
</dbReference>
<dbReference type="GO" id="GO:0007015">
    <property type="term" value="P:actin filament organization"/>
    <property type="evidence" value="ECO:0000314"/>
    <property type="project" value="UniProtKB"/>
</dbReference>
<dbReference type="GO" id="GO:0034314">
    <property type="term" value="P:Arp2/3 complex-mediated actin nucleation"/>
    <property type="evidence" value="ECO:0000318"/>
    <property type="project" value="GO_Central"/>
</dbReference>
<dbReference type="GO" id="GO:0006888">
    <property type="term" value="P:endoplasmic reticulum to Golgi vesicle-mediated transport"/>
    <property type="evidence" value="ECO:0000314"/>
    <property type="project" value="UniProtKB"/>
</dbReference>
<dbReference type="GO" id="GO:0048041">
    <property type="term" value="P:focal adhesion assembly"/>
    <property type="evidence" value="ECO:0000315"/>
    <property type="project" value="UniProtKB"/>
</dbReference>
<dbReference type="GO" id="GO:0030032">
    <property type="term" value="P:lamellipodium assembly"/>
    <property type="evidence" value="ECO:0000315"/>
    <property type="project" value="UniProtKB"/>
</dbReference>
<dbReference type="GO" id="GO:0097320">
    <property type="term" value="P:plasma membrane tubulation"/>
    <property type="evidence" value="ECO:0000314"/>
    <property type="project" value="UniProtKB"/>
</dbReference>
<dbReference type="GO" id="GO:0051127">
    <property type="term" value="P:positive regulation of actin nucleation"/>
    <property type="evidence" value="ECO:0000314"/>
    <property type="project" value="UniProtKB"/>
</dbReference>
<dbReference type="Gene3D" id="6.10.280.150">
    <property type="match status" value="1"/>
</dbReference>
<dbReference type="InterPro" id="IPR031738">
    <property type="entry name" value="JMY/WHAMM"/>
</dbReference>
<dbReference type="InterPro" id="IPR031808">
    <property type="entry name" value="JMY/WHAMM_N"/>
</dbReference>
<dbReference type="InterPro" id="IPR003124">
    <property type="entry name" value="WH2_dom"/>
</dbReference>
<dbReference type="PANTHER" id="PTHR23330">
    <property type="entry name" value="P300 TRANSCRIPTIONAL COFACTOR JMY-RELATED"/>
    <property type="match status" value="1"/>
</dbReference>
<dbReference type="PANTHER" id="PTHR23330:SF6">
    <property type="entry name" value="WASP HOMOLOG-ASSOCIATED PROTEIN WITH ACTIN, MEMBRANES AND MICROTUBULES"/>
    <property type="match status" value="1"/>
</dbReference>
<dbReference type="Pfam" id="PF15871">
    <property type="entry name" value="JMY"/>
    <property type="match status" value="1"/>
</dbReference>
<dbReference type="Pfam" id="PF15920">
    <property type="entry name" value="WHAMM-JMY_N"/>
    <property type="match status" value="1"/>
</dbReference>
<dbReference type="PROSITE" id="PS51082">
    <property type="entry name" value="WH2"/>
    <property type="match status" value="1"/>
</dbReference>
<reference key="1">
    <citation type="journal article" date="2001" name="DNA Res.">
        <title>Prediction of the coding sequences of unidentified human genes. XXII. The complete sequences of 50 new cDNA clones which code for large proteins.</title>
        <authorList>
            <person name="Nagase T."/>
            <person name="Kikuno R."/>
            <person name="Ohara O."/>
        </authorList>
    </citation>
    <scope>NUCLEOTIDE SEQUENCE [LARGE SCALE MRNA]</scope>
    <source>
        <tissue>Brain</tissue>
    </source>
</reference>
<reference key="2">
    <citation type="journal article" date="2006" name="Nature">
        <title>Analysis of the DNA sequence and duplication history of human chromosome 15.</title>
        <authorList>
            <person name="Zody M.C."/>
            <person name="Garber M."/>
            <person name="Sharpe T."/>
            <person name="Young S.K."/>
            <person name="Rowen L."/>
            <person name="O'Neill K."/>
            <person name="Whittaker C.A."/>
            <person name="Kamal M."/>
            <person name="Chang J.L."/>
            <person name="Cuomo C.A."/>
            <person name="Dewar K."/>
            <person name="FitzGerald M.G."/>
            <person name="Kodira C.D."/>
            <person name="Madan A."/>
            <person name="Qin S."/>
            <person name="Yang X."/>
            <person name="Abbasi N."/>
            <person name="Abouelleil A."/>
            <person name="Arachchi H.M."/>
            <person name="Baradarani L."/>
            <person name="Birditt B."/>
            <person name="Bloom S."/>
            <person name="Bloom T."/>
            <person name="Borowsky M.L."/>
            <person name="Burke J."/>
            <person name="Butler J."/>
            <person name="Cook A."/>
            <person name="DeArellano K."/>
            <person name="DeCaprio D."/>
            <person name="Dorris L. III"/>
            <person name="Dors M."/>
            <person name="Eichler E.E."/>
            <person name="Engels R."/>
            <person name="Fahey J."/>
            <person name="Fleetwood P."/>
            <person name="Friedman C."/>
            <person name="Gearin G."/>
            <person name="Hall J.L."/>
            <person name="Hensley G."/>
            <person name="Johnson E."/>
            <person name="Jones C."/>
            <person name="Kamat A."/>
            <person name="Kaur A."/>
            <person name="Locke D.P."/>
            <person name="Madan A."/>
            <person name="Munson G."/>
            <person name="Jaffe D.B."/>
            <person name="Lui A."/>
            <person name="Macdonald P."/>
            <person name="Mauceli E."/>
            <person name="Naylor J.W."/>
            <person name="Nesbitt R."/>
            <person name="Nicol R."/>
            <person name="O'Leary S.B."/>
            <person name="Ratcliffe A."/>
            <person name="Rounsley S."/>
            <person name="She X."/>
            <person name="Sneddon K.M.B."/>
            <person name="Stewart S."/>
            <person name="Sougnez C."/>
            <person name="Stone S.M."/>
            <person name="Topham K."/>
            <person name="Vincent D."/>
            <person name="Wang S."/>
            <person name="Zimmer A.R."/>
            <person name="Birren B.W."/>
            <person name="Hood L."/>
            <person name="Lander E.S."/>
            <person name="Nusbaum C."/>
        </authorList>
    </citation>
    <scope>NUCLEOTIDE SEQUENCE [LARGE SCALE GENOMIC DNA]</scope>
</reference>
<reference key="3">
    <citation type="journal article" date="2004" name="Nat. Genet.">
        <title>Complete sequencing and characterization of 21,243 full-length human cDNAs.</title>
        <authorList>
            <person name="Ota T."/>
            <person name="Suzuki Y."/>
            <person name="Nishikawa T."/>
            <person name="Otsuki T."/>
            <person name="Sugiyama T."/>
            <person name="Irie R."/>
            <person name="Wakamatsu A."/>
            <person name="Hayashi K."/>
            <person name="Sato H."/>
            <person name="Nagai K."/>
            <person name="Kimura K."/>
            <person name="Makita H."/>
            <person name="Sekine M."/>
            <person name="Obayashi M."/>
            <person name="Nishi T."/>
            <person name="Shibahara T."/>
            <person name="Tanaka T."/>
            <person name="Ishii S."/>
            <person name="Yamamoto J."/>
            <person name="Saito K."/>
            <person name="Kawai Y."/>
            <person name="Isono Y."/>
            <person name="Nakamura Y."/>
            <person name="Nagahari K."/>
            <person name="Murakami K."/>
            <person name="Yasuda T."/>
            <person name="Iwayanagi T."/>
            <person name="Wagatsuma M."/>
            <person name="Shiratori A."/>
            <person name="Sudo H."/>
            <person name="Hosoiri T."/>
            <person name="Kaku Y."/>
            <person name="Kodaira H."/>
            <person name="Kondo H."/>
            <person name="Sugawara M."/>
            <person name="Takahashi M."/>
            <person name="Kanda K."/>
            <person name="Yokoi T."/>
            <person name="Furuya T."/>
            <person name="Kikkawa E."/>
            <person name="Omura Y."/>
            <person name="Abe K."/>
            <person name="Kamihara K."/>
            <person name="Katsuta N."/>
            <person name="Sato K."/>
            <person name="Tanikawa M."/>
            <person name="Yamazaki M."/>
            <person name="Ninomiya K."/>
            <person name="Ishibashi T."/>
            <person name="Yamashita H."/>
            <person name="Murakawa K."/>
            <person name="Fujimori K."/>
            <person name="Tanai H."/>
            <person name="Kimata M."/>
            <person name="Watanabe M."/>
            <person name="Hiraoka S."/>
            <person name="Chiba Y."/>
            <person name="Ishida S."/>
            <person name="Ono Y."/>
            <person name="Takiguchi S."/>
            <person name="Watanabe S."/>
            <person name="Yosida M."/>
            <person name="Hotuta T."/>
            <person name="Kusano J."/>
            <person name="Kanehori K."/>
            <person name="Takahashi-Fujii A."/>
            <person name="Hara H."/>
            <person name="Tanase T.-O."/>
            <person name="Nomura Y."/>
            <person name="Togiya S."/>
            <person name="Komai F."/>
            <person name="Hara R."/>
            <person name="Takeuchi K."/>
            <person name="Arita M."/>
            <person name="Imose N."/>
            <person name="Musashino K."/>
            <person name="Yuuki H."/>
            <person name="Oshima A."/>
            <person name="Sasaki N."/>
            <person name="Aotsuka S."/>
            <person name="Yoshikawa Y."/>
            <person name="Matsunawa H."/>
            <person name="Ichihara T."/>
            <person name="Shiohata N."/>
            <person name="Sano S."/>
            <person name="Moriya S."/>
            <person name="Momiyama H."/>
            <person name="Satoh N."/>
            <person name="Takami S."/>
            <person name="Terashima Y."/>
            <person name="Suzuki O."/>
            <person name="Nakagawa S."/>
            <person name="Senoh A."/>
            <person name="Mizoguchi H."/>
            <person name="Goto Y."/>
            <person name="Shimizu F."/>
            <person name="Wakebe H."/>
            <person name="Hishigaki H."/>
            <person name="Watanabe T."/>
            <person name="Sugiyama A."/>
            <person name="Takemoto M."/>
            <person name="Kawakami B."/>
            <person name="Yamazaki M."/>
            <person name="Watanabe K."/>
            <person name="Kumagai A."/>
            <person name="Itakura S."/>
            <person name="Fukuzumi Y."/>
            <person name="Fujimori Y."/>
            <person name="Komiyama M."/>
            <person name="Tashiro H."/>
            <person name="Tanigami A."/>
            <person name="Fujiwara T."/>
            <person name="Ono T."/>
            <person name="Yamada K."/>
            <person name="Fujii Y."/>
            <person name="Ozaki K."/>
            <person name="Hirao M."/>
            <person name="Ohmori Y."/>
            <person name="Kawabata A."/>
            <person name="Hikiji T."/>
            <person name="Kobatake N."/>
            <person name="Inagaki H."/>
            <person name="Ikema Y."/>
            <person name="Okamoto S."/>
            <person name="Okitani R."/>
            <person name="Kawakami T."/>
            <person name="Noguchi S."/>
            <person name="Itoh T."/>
            <person name="Shigeta K."/>
            <person name="Senba T."/>
            <person name="Matsumura K."/>
            <person name="Nakajima Y."/>
            <person name="Mizuno T."/>
            <person name="Morinaga M."/>
            <person name="Sasaki M."/>
            <person name="Togashi T."/>
            <person name="Oyama M."/>
            <person name="Hata H."/>
            <person name="Watanabe M."/>
            <person name="Komatsu T."/>
            <person name="Mizushima-Sugano J."/>
            <person name="Satoh T."/>
            <person name="Shirai Y."/>
            <person name="Takahashi Y."/>
            <person name="Nakagawa K."/>
            <person name="Okumura K."/>
            <person name="Nagase T."/>
            <person name="Nomura N."/>
            <person name="Kikuchi H."/>
            <person name="Masuho Y."/>
            <person name="Yamashita R."/>
            <person name="Nakai K."/>
            <person name="Yada T."/>
            <person name="Nakamura Y."/>
            <person name="Ohara O."/>
            <person name="Isogai T."/>
            <person name="Sugano S."/>
        </authorList>
    </citation>
    <scope>NUCLEOTIDE SEQUENCE [LARGE SCALE MRNA] OF 568-809</scope>
    <source>
        <tissue>Thymus</tissue>
    </source>
</reference>
<reference key="4">
    <citation type="journal article" date="2008" name="Cell">
        <title>WHAMM is an Arp2/3 complex activator that binds microtubules and functions in ER to Golgi transport.</title>
        <authorList>
            <person name="Campellone K.G."/>
            <person name="Webb N.J."/>
            <person name="Znameroski E.A."/>
            <person name="Welch M.D."/>
        </authorList>
    </citation>
    <scope>FUNCTION</scope>
    <scope>INTERACTION WITH ACTR3 AND MICROTUBULES</scope>
    <scope>MUTAGENESIS OF TRP-807</scope>
</reference>
<reference key="5">
    <citation type="journal article" date="2008" name="Proc. Natl. Acad. Sci. U.S.A.">
        <title>A quantitative atlas of mitotic phosphorylation.</title>
        <authorList>
            <person name="Dephoure N."/>
            <person name="Zhou C."/>
            <person name="Villen J."/>
            <person name="Beausoleil S.A."/>
            <person name="Bakalarski C.E."/>
            <person name="Elledge S.J."/>
            <person name="Gygi S.P."/>
        </authorList>
    </citation>
    <scope>PHOSPHORYLATION [LARGE SCALE ANALYSIS] AT SER-606</scope>
    <scope>IDENTIFICATION BY MASS SPECTROMETRY [LARGE SCALE ANALYSIS]</scope>
    <source>
        <tissue>Cervix carcinoma</tissue>
    </source>
</reference>
<reference key="6">
    <citation type="journal article" date="2012" name="Mol. Biol. Cell">
        <title>RhoD regulates cytoskeletal dynamics via the actin nucleation-promoting factor WASp homologue associated with actin Golgi membranes and microtubules.</title>
        <authorList>
            <person name="Gad A.K."/>
            <person name="Nehru V."/>
            <person name="Ruusala A."/>
            <person name="Aspenstrom P."/>
        </authorList>
    </citation>
    <scope>FUNCTION</scope>
    <scope>INTERACTION WITH RHOD</scope>
</reference>
<reference key="7">
    <citation type="journal article" date="2012" name="J. Cell Biol.">
        <title>Structural insights into WHAMM-mediated cytoskeletal coordination during membrane remodeling.</title>
        <authorList>
            <person name="Shen Q.T."/>
            <person name="Hsiue P.P."/>
            <person name="Sindelar C.V."/>
            <person name="Welch M.D."/>
            <person name="Campellone K.G."/>
            <person name="Wang H.W."/>
        </authorList>
    </citation>
    <scope>FUNCTION</scope>
    <scope>SUBUNIT</scope>
    <scope>ELECTRON MICROSCOPY IN COMPLEX WITH MICROTUBULES</scope>
</reference>
<accession>Q8TF30</accession>
<accession>Q8N1J9</accession>
<protein>
    <recommendedName>
        <fullName>WASP homolog-associated protein with actin, membranes and microtubules</fullName>
    </recommendedName>
    <alternativeName>
        <fullName>WAS protein homology region 2 domain-containing protein 1</fullName>
        <shortName>WH2 domain-containing protein 1</shortName>
    </alternativeName>
</protein>